<gene>
    <name type="primary">cyc-2.1</name>
    <name type="ORF">E04A4.7</name>
</gene>
<evidence type="ECO:0000255" key="1">
    <source>
        <dbReference type="PROSITE-ProRule" id="PRU00433"/>
    </source>
</evidence>
<evidence type="ECO:0000269" key="2">
    <source>
    </source>
</evidence>
<evidence type="ECO:0000305" key="3"/>
<feature type="initiator methionine" description="Removed" evidence="2">
    <location>
        <position position="1"/>
    </location>
</feature>
<feature type="chain" id="PRO_0000108271" description="Cytochrome c 2.1">
    <location>
        <begin position="2"/>
        <end position="111"/>
    </location>
</feature>
<feature type="binding site" description="covalent" evidence="1 2">
    <location>
        <position position="20"/>
    </location>
    <ligand>
        <name>heme c</name>
        <dbReference type="ChEBI" id="CHEBI:61717"/>
    </ligand>
</feature>
<feature type="binding site" description="covalent" evidence="1 2">
    <location>
        <position position="23"/>
    </location>
    <ligand>
        <name>heme c</name>
        <dbReference type="ChEBI" id="CHEBI:61717"/>
    </ligand>
</feature>
<feature type="binding site" description="axial binding residue">
    <location>
        <position position="24"/>
    </location>
    <ligand>
        <name>heme c</name>
        <dbReference type="ChEBI" id="CHEBI:61717"/>
    </ligand>
    <ligandPart>
        <name>Fe</name>
        <dbReference type="ChEBI" id="CHEBI:18248"/>
    </ligandPart>
</feature>
<feature type="binding site" description="axial binding residue">
    <location>
        <position position="85"/>
    </location>
    <ligand>
        <name>heme c</name>
        <dbReference type="ChEBI" id="CHEBI:61717"/>
    </ligand>
    <ligandPart>
        <name>Fe</name>
        <dbReference type="ChEBI" id="CHEBI:18248"/>
    </ligandPart>
</feature>
<feature type="modified residue" description="N-acetylserine" evidence="2">
    <location>
        <position position="2"/>
    </location>
</feature>
<feature type="sequence conflict" description="In Ref. 1; CCD68708." evidence="3" ref="1">
    <original>K</original>
    <variation>R</variation>
    <location>
        <position position="66"/>
    </location>
</feature>
<sequence length="111" mass="12233">MSDIPAGDYEKGKKVYKQRCLQCHVVDSTATKTGPTLHGVIGRTSGTVSGFDYSAANKNKGVVWTKETLFEYLLNPKKYIPGTKMVFAGLKKADERADLIKYIEVESAKSL</sequence>
<organism>
    <name type="scientific">Caenorhabditis elegans</name>
    <dbReference type="NCBI Taxonomy" id="6239"/>
    <lineage>
        <taxon>Eukaryota</taxon>
        <taxon>Metazoa</taxon>
        <taxon>Ecdysozoa</taxon>
        <taxon>Nematoda</taxon>
        <taxon>Chromadorea</taxon>
        <taxon>Rhabditida</taxon>
        <taxon>Rhabditina</taxon>
        <taxon>Rhabditomorpha</taxon>
        <taxon>Rhabditoidea</taxon>
        <taxon>Rhabditidae</taxon>
        <taxon>Peloderinae</taxon>
        <taxon>Caenorhabditis</taxon>
    </lineage>
</organism>
<comment type="function">
    <text>Electron carrier protein. The oxidized form of the cytochrome c heme group can accept an electron from the heme group of the cytochrome c1 subunit of cytochrome reductase. Cytochrome c then transfers this electron to the cytochrome oxidase complex, the final protein carrier in the mitochondrial electron-transport chain.</text>
</comment>
<comment type="subcellular location">
    <subcellularLocation>
        <location>Mitochondrion intermembrane space</location>
    </subcellularLocation>
    <text>Loosely associated with the inner membrane.</text>
</comment>
<comment type="PTM">
    <text>Binds 1 heme c group covalently per subunit.</text>
</comment>
<comment type="similarity">
    <text evidence="3">Belongs to the cytochrome c family.</text>
</comment>
<comment type="online information" name="Protein Spotlight">
    <link uri="https://www.proteinspotlight.org/back_issues/076"/>
    <text>Life shuttle - Issue 76 of November 2006</text>
</comment>
<name>CYC21_CAEEL</name>
<keyword id="KW-0007">Acetylation</keyword>
<keyword id="KW-0903">Direct protein sequencing</keyword>
<keyword id="KW-0249">Electron transport</keyword>
<keyword id="KW-0349">Heme</keyword>
<keyword id="KW-0408">Iron</keyword>
<keyword id="KW-0479">Metal-binding</keyword>
<keyword id="KW-0496">Mitochondrion</keyword>
<keyword id="KW-1185">Reference proteome</keyword>
<keyword id="KW-0679">Respiratory chain</keyword>
<keyword id="KW-0813">Transport</keyword>
<accession>P19974</accession>
<accession>O44479</accession>
<proteinExistence type="evidence at protein level"/>
<reference key="1">
    <citation type="journal article" date="1998" name="Science">
        <title>Genome sequence of the nematode C. elegans: a platform for investigating biology.</title>
        <authorList>
            <consortium name="The C. elegans sequencing consortium"/>
        </authorList>
    </citation>
    <scope>NUCLEOTIDE SEQUENCE [LARGE SCALE GENOMIC DNA]</scope>
    <source>
        <strain>Bristol N2</strain>
    </source>
</reference>
<reference key="2">
    <citation type="journal article" date="1990" name="Biochem. J.">
        <title>The primary structure of cytochrome c from the nematode Caenorhabditis elegans.</title>
        <authorList>
            <person name="Vanfleteren J.R."/>
            <person name="Evers E.A.I.M."/>
            <person name="van de Werken G."/>
            <person name="van Beeumen J.J."/>
        </authorList>
    </citation>
    <scope>PROTEIN SEQUENCE OF 2-111</scope>
    <scope>ACETYLATION AT SER-2</scope>
    <source>
        <strain>Bristol N2</strain>
    </source>
</reference>
<protein>
    <recommendedName>
        <fullName>Cytochrome c 2.1</fullName>
    </recommendedName>
</protein>
<dbReference type="EMBL" id="FO081039">
    <property type="protein sequence ID" value="CCD68708.1"/>
    <property type="molecule type" value="Genomic_DNA"/>
</dbReference>
<dbReference type="PIR" id="T32611">
    <property type="entry name" value="T32611"/>
</dbReference>
<dbReference type="RefSeq" id="NP_500629.1">
    <property type="nucleotide sequence ID" value="NM_068228.5"/>
</dbReference>
<dbReference type="SMR" id="P19974"/>
<dbReference type="BioGRID" id="42372">
    <property type="interactions" value="39"/>
</dbReference>
<dbReference type="FunCoup" id="P19974">
    <property type="interactions" value="975"/>
</dbReference>
<dbReference type="STRING" id="6239.E04A4.7.1"/>
<dbReference type="iPTMnet" id="P19974"/>
<dbReference type="PaxDb" id="6239-E04A4.7.1"/>
<dbReference type="PeptideAtlas" id="P19974"/>
<dbReference type="EnsemblMetazoa" id="E04A4.7.1">
    <property type="protein sequence ID" value="E04A4.7.1"/>
    <property type="gene ID" value="WBGene00017121"/>
</dbReference>
<dbReference type="EnsemblMetazoa" id="E04A4.7.2">
    <property type="protein sequence ID" value="E04A4.7.2"/>
    <property type="gene ID" value="WBGene00017121"/>
</dbReference>
<dbReference type="AGR" id="WB:WBGene00017121"/>
<dbReference type="WormBase" id="E04A4.7">
    <property type="protein sequence ID" value="CE16968"/>
    <property type="gene ID" value="WBGene00017121"/>
    <property type="gene designation" value="cyc-2.1"/>
</dbReference>
<dbReference type="eggNOG" id="KOG3453">
    <property type="taxonomic scope" value="Eukaryota"/>
</dbReference>
<dbReference type="GeneTree" id="ENSGT00940000168884"/>
<dbReference type="HOGENOM" id="CLU_060944_3_1_1"/>
<dbReference type="InParanoid" id="P19974"/>
<dbReference type="OrthoDB" id="449280at2759"/>
<dbReference type="PhylomeDB" id="P19974"/>
<dbReference type="Reactome" id="R-CEL-111457">
    <property type="pathway name" value="Release of apoptotic factors from the mitochondria"/>
</dbReference>
<dbReference type="Reactome" id="R-CEL-3299685">
    <property type="pathway name" value="Detoxification of Reactive Oxygen Species"/>
</dbReference>
<dbReference type="Reactome" id="R-CEL-5620971">
    <property type="pathway name" value="Pyroptosis"/>
</dbReference>
<dbReference type="Reactome" id="R-CEL-611105">
    <property type="pathway name" value="Respiratory electron transport"/>
</dbReference>
<dbReference type="PRO" id="PR:P19974"/>
<dbReference type="Proteomes" id="UP000001940">
    <property type="component" value="Chromosome IV"/>
</dbReference>
<dbReference type="Bgee" id="WBGene00017121">
    <property type="expression patterns" value="Expressed in embryo and 4 other cell types or tissues"/>
</dbReference>
<dbReference type="GO" id="GO:0005758">
    <property type="term" value="C:mitochondrial intermembrane space"/>
    <property type="evidence" value="ECO:0000318"/>
    <property type="project" value="GO_Central"/>
</dbReference>
<dbReference type="GO" id="GO:0098803">
    <property type="term" value="C:respiratory chain complex"/>
    <property type="evidence" value="ECO:0000305"/>
    <property type="project" value="UniProtKB"/>
</dbReference>
<dbReference type="GO" id="GO:0009055">
    <property type="term" value="F:electron transfer activity"/>
    <property type="evidence" value="ECO:0000314"/>
    <property type="project" value="UniProtKB"/>
</dbReference>
<dbReference type="GO" id="GO:0020037">
    <property type="term" value="F:heme binding"/>
    <property type="evidence" value="ECO:0000305"/>
    <property type="project" value="UniProtKB"/>
</dbReference>
<dbReference type="GO" id="GO:0046872">
    <property type="term" value="F:metal ion binding"/>
    <property type="evidence" value="ECO:0007669"/>
    <property type="project" value="UniProtKB-KW"/>
</dbReference>
<dbReference type="GO" id="GO:0022900">
    <property type="term" value="P:electron transport chain"/>
    <property type="evidence" value="ECO:0000314"/>
    <property type="project" value="UniProtKB"/>
</dbReference>
<dbReference type="GO" id="GO:0006123">
    <property type="term" value="P:mitochondrial electron transport, cytochrome c to oxygen"/>
    <property type="evidence" value="ECO:0000318"/>
    <property type="project" value="GO_Central"/>
</dbReference>
<dbReference type="GO" id="GO:0006122">
    <property type="term" value="P:mitochondrial electron transport, ubiquinol to cytochrome c"/>
    <property type="evidence" value="ECO:0000318"/>
    <property type="project" value="GO_Central"/>
</dbReference>
<dbReference type="FunFam" id="1.10.760.10:FF:000014">
    <property type="entry name" value="Cytochrome c"/>
    <property type="match status" value="1"/>
</dbReference>
<dbReference type="Gene3D" id="1.10.760.10">
    <property type="entry name" value="Cytochrome c-like domain"/>
    <property type="match status" value="1"/>
</dbReference>
<dbReference type="InterPro" id="IPR009056">
    <property type="entry name" value="Cyt_c-like_dom"/>
</dbReference>
<dbReference type="InterPro" id="IPR036909">
    <property type="entry name" value="Cyt_c-like_dom_sf"/>
</dbReference>
<dbReference type="InterPro" id="IPR002327">
    <property type="entry name" value="Cyt_c_1A/1B"/>
</dbReference>
<dbReference type="PANTHER" id="PTHR11961">
    <property type="entry name" value="CYTOCHROME C"/>
    <property type="match status" value="1"/>
</dbReference>
<dbReference type="Pfam" id="PF00034">
    <property type="entry name" value="Cytochrom_C"/>
    <property type="match status" value="1"/>
</dbReference>
<dbReference type="PRINTS" id="PR00604">
    <property type="entry name" value="CYTCHRMECIAB"/>
</dbReference>
<dbReference type="SUPFAM" id="SSF46626">
    <property type="entry name" value="Cytochrome c"/>
    <property type="match status" value="1"/>
</dbReference>
<dbReference type="PROSITE" id="PS51007">
    <property type="entry name" value="CYTC"/>
    <property type="match status" value="1"/>
</dbReference>